<proteinExistence type="inferred from homology"/>
<evidence type="ECO:0000255" key="1"/>
<evidence type="ECO:0000255" key="2">
    <source>
        <dbReference type="PROSITE-ProRule" id="PRU00722"/>
    </source>
</evidence>
<evidence type="ECO:0000305" key="3"/>
<comment type="function">
    <text>Could have proteinase inhibiting capacity.</text>
</comment>
<comment type="subcellular location">
    <subcellularLocation>
        <location evidence="3">Secreted</location>
    </subcellularLocation>
</comment>
<protein>
    <recommendedName>
        <fullName>WAP four-disulfide core domain protein 18</fullName>
    </recommendedName>
    <alternativeName>
        <fullName>Extracellular peptidase inhibitor</fullName>
    </alternativeName>
    <alternativeName>
        <fullName>Protein WDNM1</fullName>
    </alternativeName>
</protein>
<sequence length="74" mass="7787">MKTATVFVLVALIFMTMTTAWALSNPKEKPGACPKPPPRSFGTCDERCTGDGSCSGNMKCCSNGCGHACKPPVF</sequence>
<accession>P62810</accession>
<accession>Q62477</accession>
<accession>Q91VQ6</accession>
<feature type="signal peptide" evidence="1">
    <location>
        <begin position="1"/>
        <end position="24"/>
    </location>
</feature>
<feature type="chain" id="PRO_0000041376" description="WAP four-disulfide core domain protein 18">
    <location>
        <begin position="25"/>
        <end position="74"/>
    </location>
</feature>
<feature type="domain" description="WAP" evidence="2">
    <location>
        <begin position="26"/>
        <end position="73"/>
    </location>
</feature>
<feature type="sequence conflict" description="In Ref. 2; AAH10986." evidence="3" ref="2">
    <original>R</original>
    <variation>Q</variation>
    <location>
        <position position="47"/>
    </location>
</feature>
<dbReference type="EMBL" id="X93037">
    <property type="protein sequence ID" value="CAA63605.1"/>
    <property type="molecule type" value="mRNA"/>
</dbReference>
<dbReference type="EMBL" id="BC010986">
    <property type="protein sequence ID" value="AAH10986.1"/>
    <property type="molecule type" value="mRNA"/>
</dbReference>
<dbReference type="CCDS" id="CCDS25175.1"/>
<dbReference type="PIR" id="S61553">
    <property type="entry name" value="S61553"/>
</dbReference>
<dbReference type="RefSeq" id="NP_031995.3">
    <property type="nucleotide sequence ID" value="NM_007969.4"/>
</dbReference>
<dbReference type="SMR" id="P62810"/>
<dbReference type="FunCoup" id="P62810">
    <property type="interactions" value="5"/>
</dbReference>
<dbReference type="STRING" id="10090.ENSMUSP00000001009"/>
<dbReference type="MEROPS" id="I17.004"/>
<dbReference type="PaxDb" id="10090-ENSMUSP00000001009"/>
<dbReference type="DNASU" id="14038"/>
<dbReference type="Ensembl" id="ENSMUST00000001009.14">
    <property type="protein sequence ID" value="ENSMUSP00000001009.8"/>
    <property type="gene ID" value="ENSMUSG00000000983.14"/>
</dbReference>
<dbReference type="GeneID" id="14038"/>
<dbReference type="KEGG" id="mmu:14038"/>
<dbReference type="UCSC" id="uc007kpr.1">
    <property type="organism name" value="mouse"/>
</dbReference>
<dbReference type="AGR" id="MGI:107506"/>
<dbReference type="CTD" id="14038"/>
<dbReference type="MGI" id="MGI:107506">
    <property type="gene designation" value="Wfdc18"/>
</dbReference>
<dbReference type="VEuPathDB" id="HostDB:ENSMUSG00000000983"/>
<dbReference type="eggNOG" id="ENOG502RXHY">
    <property type="taxonomic scope" value="Eukaryota"/>
</dbReference>
<dbReference type="GeneTree" id="ENSGT00530000064879"/>
<dbReference type="HOGENOM" id="CLU_2637440_0_0_1"/>
<dbReference type="InParanoid" id="P62810"/>
<dbReference type="OMA" id="CAWRPPF"/>
<dbReference type="OrthoDB" id="6060011at2759"/>
<dbReference type="PhylomeDB" id="P62810"/>
<dbReference type="BioGRID-ORCS" id="14038">
    <property type="hits" value="5 hits in 77 CRISPR screens"/>
</dbReference>
<dbReference type="ChiTaRS" id="Wfdc18">
    <property type="organism name" value="mouse"/>
</dbReference>
<dbReference type="PRO" id="PR:P62810"/>
<dbReference type="Proteomes" id="UP000000589">
    <property type="component" value="Chromosome 11"/>
</dbReference>
<dbReference type="RNAct" id="P62810">
    <property type="molecule type" value="protein"/>
</dbReference>
<dbReference type="Bgee" id="ENSMUSG00000000983">
    <property type="expression patterns" value="Expressed in lacrimal gland and 87 other cell types or tissues"/>
</dbReference>
<dbReference type="ExpressionAtlas" id="P62810">
    <property type="expression patterns" value="baseline and differential"/>
</dbReference>
<dbReference type="GO" id="GO:0005576">
    <property type="term" value="C:extracellular region"/>
    <property type="evidence" value="ECO:0007669"/>
    <property type="project" value="UniProtKB-SubCell"/>
</dbReference>
<dbReference type="GO" id="GO:0030414">
    <property type="term" value="F:peptidase inhibitor activity"/>
    <property type="evidence" value="ECO:0007669"/>
    <property type="project" value="UniProtKB-KW"/>
</dbReference>
<dbReference type="CDD" id="cd00199">
    <property type="entry name" value="WAP"/>
    <property type="match status" value="1"/>
</dbReference>
<dbReference type="FunFam" id="4.10.75.10:FF:000001">
    <property type="entry name" value="Anosmin 1"/>
    <property type="match status" value="1"/>
</dbReference>
<dbReference type="Gene3D" id="4.10.75.10">
    <property type="entry name" value="Elafin-like"/>
    <property type="match status" value="1"/>
</dbReference>
<dbReference type="InterPro" id="IPR036645">
    <property type="entry name" value="Elafin-like_sf"/>
</dbReference>
<dbReference type="InterPro" id="IPR008197">
    <property type="entry name" value="WAP_dom"/>
</dbReference>
<dbReference type="InterPro" id="IPR050514">
    <property type="entry name" value="WAP_four-disulfide_core"/>
</dbReference>
<dbReference type="PANTHER" id="PTHR19441:SF92">
    <property type="entry name" value="WAP FOUR-DISULFIDE CORE DOMAIN PROTEIN 18"/>
    <property type="match status" value="1"/>
</dbReference>
<dbReference type="PANTHER" id="PTHR19441">
    <property type="entry name" value="WHEY ACDIC PROTEIN WAP"/>
    <property type="match status" value="1"/>
</dbReference>
<dbReference type="Pfam" id="PF00095">
    <property type="entry name" value="WAP"/>
    <property type="match status" value="1"/>
</dbReference>
<dbReference type="PRINTS" id="PR00003">
    <property type="entry name" value="4DISULPHCORE"/>
</dbReference>
<dbReference type="SMART" id="SM00217">
    <property type="entry name" value="WAP"/>
    <property type="match status" value="1"/>
</dbReference>
<dbReference type="SUPFAM" id="SSF57256">
    <property type="entry name" value="Elafin-like"/>
    <property type="match status" value="1"/>
</dbReference>
<dbReference type="PROSITE" id="PS51390">
    <property type="entry name" value="WAP"/>
    <property type="match status" value="1"/>
</dbReference>
<organism>
    <name type="scientific">Mus musculus</name>
    <name type="common">Mouse</name>
    <dbReference type="NCBI Taxonomy" id="10090"/>
    <lineage>
        <taxon>Eukaryota</taxon>
        <taxon>Metazoa</taxon>
        <taxon>Chordata</taxon>
        <taxon>Craniata</taxon>
        <taxon>Vertebrata</taxon>
        <taxon>Euteleostomi</taxon>
        <taxon>Mammalia</taxon>
        <taxon>Eutheria</taxon>
        <taxon>Euarchontoglires</taxon>
        <taxon>Glires</taxon>
        <taxon>Rodentia</taxon>
        <taxon>Myomorpha</taxon>
        <taxon>Muroidea</taxon>
        <taxon>Muridae</taxon>
        <taxon>Murinae</taxon>
        <taxon>Mus</taxon>
        <taxon>Mus</taxon>
    </lineage>
</organism>
<reference key="1">
    <citation type="journal article" date="1994" name="Oncogene">
        <title>neu and ras initiate murine mammary tumors that share genetic markers generally absent in c-myc and int-2-initiated tumors.</title>
        <authorList>
            <person name="Morrison B.W."/>
            <person name="Leder P."/>
        </authorList>
    </citation>
    <scope>NUCLEOTIDE SEQUENCE [MRNA]</scope>
    <source>
        <strain>FVB/N</strain>
        <tissue>Mammary gland</tissue>
    </source>
</reference>
<reference key="2">
    <citation type="journal article" date="2004" name="Genome Res.">
        <title>The status, quality, and expansion of the NIH full-length cDNA project: the Mammalian Gene Collection (MGC).</title>
        <authorList>
            <consortium name="The MGC Project Team"/>
        </authorList>
    </citation>
    <scope>NUCLEOTIDE SEQUENCE [LARGE SCALE MRNA]</scope>
    <source>
        <strain>FVB/N</strain>
        <tissue>Mammary tumor</tissue>
    </source>
</reference>
<gene>
    <name type="primary">Wfdc18</name>
    <name type="synonym">Expi</name>
    <name type="synonym">Wdnm1</name>
</gene>
<keyword id="KW-0646">Protease inhibitor</keyword>
<keyword id="KW-1185">Reference proteome</keyword>
<keyword id="KW-0964">Secreted</keyword>
<keyword id="KW-0732">Signal</keyword>
<name>WFD18_MOUSE</name>